<comment type="function">
    <text evidence="2 3">Receptor-like protein that regulates shoot meristem proliferation. Based on additive and synergistic phenotypes of double mutants, it is probable that unlike CLV1 and CLV2 in A.thaliana, FAE2 and TD1 do not function exclusively in a single pathway.</text>
</comment>
<comment type="subcellular location">
    <subcellularLocation>
        <location evidence="4">Cell membrane</location>
        <topology evidence="4">Single-pass type I membrane protein</topology>
    </subcellularLocation>
</comment>
<comment type="tissue specificity">
    <text evidence="2">Expressed in ear primordia, vegetative apex and young leaf tissues. Barely detected in expanded leaf tissues and not expressed in roots.</text>
</comment>
<comment type="disruption phenotype">
    <text evidence="2">Fasciation. Flattened and wider ears with irregular rows of seeds. Thicker rachis of tassels and increased floral organ numbers.</text>
</comment>
<feature type="signal peptide" evidence="1">
    <location>
        <begin position="1"/>
        <end position="28"/>
    </location>
</feature>
<feature type="chain" id="PRO_0000422039" description="Leucine-rich repeat receptor-like protein FASCIATED EAR2">
    <location>
        <begin position="29"/>
        <end position="613"/>
    </location>
</feature>
<feature type="topological domain" description="Extracellular" evidence="1">
    <location>
        <begin position="29"/>
        <end position="573"/>
    </location>
</feature>
<feature type="transmembrane region" description="Helical" evidence="1">
    <location>
        <begin position="574"/>
        <end position="597"/>
    </location>
</feature>
<feature type="topological domain" description="Cytoplasmic" evidence="1">
    <location>
        <begin position="598"/>
        <end position="613"/>
    </location>
</feature>
<feature type="repeat" description="LRR 1">
    <location>
        <begin position="79"/>
        <end position="103"/>
    </location>
</feature>
<feature type="repeat" description="LRR 2">
    <location>
        <begin position="104"/>
        <end position="128"/>
    </location>
</feature>
<feature type="repeat" description="LRR 3">
    <location>
        <begin position="130"/>
        <end position="150"/>
    </location>
</feature>
<feature type="repeat" description="LRR 4">
    <location>
        <begin position="151"/>
        <end position="176"/>
    </location>
</feature>
<feature type="repeat" description="LRR 5">
    <location>
        <begin position="178"/>
        <end position="199"/>
    </location>
</feature>
<feature type="repeat" description="LRR 6">
    <location>
        <begin position="202"/>
        <end position="226"/>
    </location>
</feature>
<feature type="repeat" description="LRR 7">
    <location>
        <begin position="227"/>
        <end position="250"/>
    </location>
</feature>
<feature type="repeat" description="LRR 8">
    <location>
        <begin position="251"/>
        <end position="274"/>
    </location>
</feature>
<feature type="repeat" description="LRR 9">
    <location>
        <begin position="276"/>
        <end position="297"/>
    </location>
</feature>
<feature type="repeat" description="LRR 10">
    <location>
        <begin position="298"/>
        <end position="322"/>
    </location>
</feature>
<feature type="repeat" description="LRR 11">
    <location>
        <begin position="324"/>
        <end position="346"/>
    </location>
</feature>
<feature type="repeat" description="LRR 12">
    <location>
        <begin position="347"/>
        <end position="370"/>
    </location>
</feature>
<feature type="repeat" description="LRR 13">
    <location>
        <begin position="372"/>
        <end position="394"/>
    </location>
</feature>
<feature type="repeat" description="LRR 14">
    <location>
        <begin position="435"/>
        <end position="459"/>
    </location>
</feature>
<feature type="repeat" description="LRR 15">
    <location>
        <begin position="460"/>
        <end position="483"/>
    </location>
</feature>
<feature type="repeat" description="LRR 16">
    <location>
        <begin position="484"/>
        <end position="507"/>
    </location>
</feature>
<feature type="repeat" description="LRR 17">
    <location>
        <begin position="508"/>
        <end position="531"/>
    </location>
</feature>
<feature type="glycosylation site" description="N-linked (GlcNAc...) asparagine" evidence="1">
    <location>
        <position position="91"/>
    </location>
</feature>
<feature type="glycosylation site" description="N-linked (GlcNAc...) asparagine" evidence="1">
    <location>
        <position position="158"/>
    </location>
</feature>
<feature type="glycosylation site" description="N-linked (GlcNAc...) asparagine" evidence="1">
    <location>
        <position position="249"/>
    </location>
</feature>
<feature type="glycosylation site" description="N-linked (GlcNAc...) asparagine" evidence="1">
    <location>
        <position position="393"/>
    </location>
</feature>
<feature type="glycosylation site" description="N-linked (GlcNAc...) asparagine" evidence="1">
    <location>
        <position position="466"/>
    </location>
</feature>
<feature type="glycosylation site" description="N-linked (GlcNAc...) asparagine" evidence="1">
    <location>
        <position position="514"/>
    </location>
</feature>
<feature type="mutagenesis site" description="No fasciation but slightly increased number of kernel rows." evidence="3">
    <original>G</original>
    <variation>R</variation>
    <location>
        <position position="332"/>
    </location>
</feature>
<feature type="mutagenesis site" description="No fasciation but slightly increased number of kernel rows." evidence="3">
    <original>M</original>
    <variation>I</variation>
    <location>
        <position position="367"/>
    </location>
</feature>
<feature type="mutagenesis site" description="No fasciation but slightly increased number of kernel rows." evidence="3">
    <original>G</original>
    <variation>R</variation>
    <location>
        <position position="405"/>
    </location>
</feature>
<feature type="mutagenesis site" description="No fasciation, but larger inflorescence meristems and increased number of kernel rows." evidence="3">
    <original>P</original>
    <variation>L</variation>
    <location>
        <position position="477"/>
    </location>
</feature>
<keyword id="KW-1003">Cell membrane</keyword>
<keyword id="KW-0217">Developmental protein</keyword>
<keyword id="KW-0221">Differentiation</keyword>
<keyword id="KW-0325">Glycoprotein</keyword>
<keyword id="KW-0433">Leucine-rich repeat</keyword>
<keyword id="KW-0472">Membrane</keyword>
<keyword id="KW-0675">Receptor</keyword>
<keyword id="KW-1185">Reference proteome</keyword>
<keyword id="KW-0677">Repeat</keyword>
<keyword id="KW-0732">Signal</keyword>
<keyword id="KW-0812">Transmembrane</keyword>
<keyword id="KW-1133">Transmembrane helix</keyword>
<name>FEA2_MAIZE</name>
<accession>Q940E8</accession>
<accession>B4G061</accession>
<gene>
    <name type="primary">FEA2</name>
    <name type="ORF">ZEAMMB73_546581</name>
</gene>
<protein>
    <recommendedName>
        <fullName>Leucine-rich repeat receptor-like protein FASCIATED EAR2</fullName>
    </recommendedName>
    <alternativeName>
        <fullName>CLAVATA2-like protein</fullName>
    </alternativeName>
</protein>
<reference key="1">
    <citation type="journal article" date="2001" name="Genes Dev.">
        <title>The fasciated ear2 gene encodes a leucine-rich repeat receptor-like protein that regulates shoot meristem proliferation in maize.</title>
        <authorList>
            <person name="Taguchi-Shiobara F."/>
            <person name="Yuan Z."/>
            <person name="Hake S."/>
            <person name="Jackson D."/>
        </authorList>
    </citation>
    <scope>NUCLEOTIDE SEQUENCE [MRNA]</scope>
    <scope>FUNCTION</scope>
    <scope>TISSUE SPECIFICITY</scope>
    <scope>SUBCELLULAR LOCATION</scope>
    <scope>DISRUPTION PHENOTYPE</scope>
    <source>
        <strain>cv. B73</strain>
    </source>
</reference>
<reference key="2">
    <citation type="journal article" date="2009" name="Science">
        <title>The B73 maize genome: complexity, diversity, and dynamics.</title>
        <authorList>
            <person name="Schnable P.S."/>
            <person name="Ware D."/>
            <person name="Fulton R.S."/>
            <person name="Stein J.C."/>
            <person name="Wei F."/>
            <person name="Pasternak S."/>
            <person name="Liang C."/>
            <person name="Zhang J."/>
            <person name="Fulton L."/>
            <person name="Graves T.A."/>
            <person name="Minx P."/>
            <person name="Reily A.D."/>
            <person name="Courtney L."/>
            <person name="Kruchowski S.S."/>
            <person name="Tomlinson C."/>
            <person name="Strong C."/>
            <person name="Delehaunty K."/>
            <person name="Fronick C."/>
            <person name="Courtney B."/>
            <person name="Rock S.M."/>
            <person name="Belter E."/>
            <person name="Du F."/>
            <person name="Kim K."/>
            <person name="Abbott R.M."/>
            <person name="Cotton M."/>
            <person name="Levy A."/>
            <person name="Marchetto P."/>
            <person name="Ochoa K."/>
            <person name="Jackson S.M."/>
            <person name="Gillam B."/>
            <person name="Chen W."/>
            <person name="Yan L."/>
            <person name="Higginbotham J."/>
            <person name="Cardenas M."/>
            <person name="Waligorski J."/>
            <person name="Applebaum E."/>
            <person name="Phelps L."/>
            <person name="Falcone J."/>
            <person name="Kanchi K."/>
            <person name="Thane T."/>
            <person name="Scimone A."/>
            <person name="Thane N."/>
            <person name="Henke J."/>
            <person name="Wang T."/>
            <person name="Ruppert J."/>
            <person name="Shah N."/>
            <person name="Rotter K."/>
            <person name="Hodges J."/>
            <person name="Ingenthron E."/>
            <person name="Cordes M."/>
            <person name="Kohlberg S."/>
            <person name="Sgro J."/>
            <person name="Delgado B."/>
            <person name="Mead K."/>
            <person name="Chinwalla A."/>
            <person name="Leonard S."/>
            <person name="Crouse K."/>
            <person name="Collura K."/>
            <person name="Kudrna D."/>
            <person name="Currie J."/>
            <person name="He R."/>
            <person name="Angelova A."/>
            <person name="Rajasekar S."/>
            <person name="Mueller T."/>
            <person name="Lomeli R."/>
            <person name="Scara G."/>
            <person name="Ko A."/>
            <person name="Delaney K."/>
            <person name="Wissotski M."/>
            <person name="Lopez G."/>
            <person name="Campos D."/>
            <person name="Braidotti M."/>
            <person name="Ashley E."/>
            <person name="Golser W."/>
            <person name="Kim H."/>
            <person name="Lee S."/>
            <person name="Lin J."/>
            <person name="Dujmic Z."/>
            <person name="Kim W."/>
            <person name="Talag J."/>
            <person name="Zuccolo A."/>
            <person name="Fan C."/>
            <person name="Sebastian A."/>
            <person name="Kramer M."/>
            <person name="Spiegel L."/>
            <person name="Nascimento L."/>
            <person name="Zutavern T."/>
            <person name="Miller B."/>
            <person name="Ambroise C."/>
            <person name="Muller S."/>
            <person name="Spooner W."/>
            <person name="Narechania A."/>
            <person name="Ren L."/>
            <person name="Wei S."/>
            <person name="Kumari S."/>
            <person name="Faga B."/>
            <person name="Levy M.J."/>
            <person name="McMahan L."/>
            <person name="Van Buren P."/>
            <person name="Vaughn M.W."/>
            <person name="Ying K."/>
            <person name="Yeh C.-T."/>
            <person name="Emrich S.J."/>
            <person name="Jia Y."/>
            <person name="Kalyanaraman A."/>
            <person name="Hsia A.-P."/>
            <person name="Barbazuk W.B."/>
            <person name="Baucom R.S."/>
            <person name="Brutnell T.P."/>
            <person name="Carpita N.C."/>
            <person name="Chaparro C."/>
            <person name="Chia J.-M."/>
            <person name="Deragon J.-M."/>
            <person name="Estill J.C."/>
            <person name="Fu Y."/>
            <person name="Jeddeloh J.A."/>
            <person name="Han Y."/>
            <person name="Lee H."/>
            <person name="Li P."/>
            <person name="Lisch D.R."/>
            <person name="Liu S."/>
            <person name="Liu Z."/>
            <person name="Nagel D.H."/>
            <person name="McCann M.C."/>
            <person name="SanMiguel P."/>
            <person name="Myers A.M."/>
            <person name="Nettleton D."/>
            <person name="Nguyen J."/>
            <person name="Penning B.W."/>
            <person name="Ponnala L."/>
            <person name="Schneider K.L."/>
            <person name="Schwartz D.C."/>
            <person name="Sharma A."/>
            <person name="Soderlund C."/>
            <person name="Springer N.M."/>
            <person name="Sun Q."/>
            <person name="Wang H."/>
            <person name="Waterman M."/>
            <person name="Westerman R."/>
            <person name="Wolfgruber T.K."/>
            <person name="Yang L."/>
            <person name="Yu Y."/>
            <person name="Zhang L."/>
            <person name="Zhou S."/>
            <person name="Zhu Q."/>
            <person name="Bennetzen J.L."/>
            <person name="Dawe R.K."/>
            <person name="Jiang J."/>
            <person name="Jiang N."/>
            <person name="Presting G.G."/>
            <person name="Wessler S.R."/>
            <person name="Aluru S."/>
            <person name="Martienssen R.A."/>
            <person name="Clifton S.W."/>
            <person name="McCombie W.R."/>
            <person name="Wing R.A."/>
            <person name="Wilson R.K."/>
        </authorList>
    </citation>
    <scope>NUCLEOTIDE SEQUENCE [LARGE SCALE GENOMIC DNA]</scope>
    <source>
        <strain>cv. B73</strain>
    </source>
</reference>
<reference key="3">
    <citation type="submission" date="2012-08" db="EMBL/GenBank/DDBJ databases">
        <authorList>
            <consortium name="Maize Genome Sequencing Project"/>
        </authorList>
    </citation>
    <scope>GENOME REANNOTATION</scope>
</reference>
<reference key="4">
    <citation type="journal article" date="2009" name="PLoS Genet.">
        <title>Sequencing, mapping, and analysis of 27,455 maize full-length cDNAs.</title>
        <authorList>
            <person name="Soderlund C."/>
            <person name="Descour A."/>
            <person name="Kudrna D."/>
            <person name="Bomhoff M."/>
            <person name="Boyd L."/>
            <person name="Currie J."/>
            <person name="Angelova A."/>
            <person name="Collura K."/>
            <person name="Wissotski M."/>
            <person name="Ashley E."/>
            <person name="Morrow D."/>
            <person name="Fernandes J."/>
            <person name="Walbot V."/>
            <person name="Yu Y."/>
        </authorList>
    </citation>
    <scope>NUCLEOTIDE SEQUENCE [LARGE SCALE MRNA]</scope>
    <source>
        <strain>cv. B73</strain>
    </source>
</reference>
<reference key="5">
    <citation type="journal article" date="2013" name="Nat. Genet.">
        <title>Quantitative variation in maize kernel row number is controlled by the FASCIATED EAR2 locus.</title>
        <authorList>
            <person name="Bommert P."/>
            <person name="Nagasawa N.S."/>
            <person name="Jackson D."/>
        </authorList>
    </citation>
    <scope>MUTAGENESIS OF GLY-332; MET-367; GLY-405 AND PRO-477</scope>
    <scope>FUNCTION</scope>
</reference>
<organism>
    <name type="scientific">Zea mays</name>
    <name type="common">Maize</name>
    <dbReference type="NCBI Taxonomy" id="4577"/>
    <lineage>
        <taxon>Eukaryota</taxon>
        <taxon>Viridiplantae</taxon>
        <taxon>Streptophyta</taxon>
        <taxon>Embryophyta</taxon>
        <taxon>Tracheophyta</taxon>
        <taxon>Spermatophyta</taxon>
        <taxon>Magnoliopsida</taxon>
        <taxon>Liliopsida</taxon>
        <taxon>Poales</taxon>
        <taxon>Poaceae</taxon>
        <taxon>PACMAD clade</taxon>
        <taxon>Panicoideae</taxon>
        <taxon>Andropogonodae</taxon>
        <taxon>Andropogoneae</taxon>
        <taxon>Tripsacinae</taxon>
        <taxon>Zea</taxon>
    </lineage>
</organism>
<sequence length="613" mass="63951">MLTATPLPHQLLATFLLVLASATQPAVPASTDRAALLAFRASLSPPSRAALSSWSGPLSPSWLGVSLHPATAPAPSVTTPSVAELSLRGLNLTGVIPAAPLALLRRLRTLDLSANALSGELPCSLPRSLLALDLSRNALSGAVPTCLPSSLPALRTLNLSANFLRLPLSPRLSFPARLAALDLSRNAISGAVPPRIVADPDNSALLLLDLSHNRFSGEIPAGIAAVRSLQGLFLADNQLSGDIPPGIGNLTYLQVLDLSNNRLSGSVPAGLAGCFQLLYLQLGGNQLSGALRPELDALASLKVLDLSNNKISGEIPLPLAGCRSLEVVDLSGNEISGELSSAVAKWLSLKFLSLAGNQLSGHLPDWMFSFPLLQWLDLSSNKFVGFIPDGGFNVSEVLNGGGGQGTPSESVLPPQLFVSASVDTVSWQLDLGYDVQATTGIDLSGNELCGEIPEGLVDMKGLEYLNLSCNYLAGQIPAGLGGMGRLHTLDFSHNGLSGEVPPGIAAMTVLEVLNLSYNSLSGPLPTTKFPGALAGNPGICSGKGCSENARTPEGKMEGSNHRGWLGGWHGENGWVSLGAFCISTMTSFYVSLATLLCSSNARNFVFRPVRVEY</sequence>
<dbReference type="EMBL" id="AY055124">
    <property type="protein sequence ID" value="AAL17871.1"/>
    <property type="molecule type" value="mRNA"/>
</dbReference>
<dbReference type="EMBL" id="CM000780">
    <property type="protein sequence ID" value="AFW62869.1"/>
    <property type="molecule type" value="Genomic_DNA"/>
</dbReference>
<dbReference type="EMBL" id="BT042749">
    <property type="protein sequence ID" value="ACF87754.2"/>
    <property type="molecule type" value="mRNA"/>
</dbReference>
<dbReference type="RefSeq" id="NP_001105662.1">
    <property type="nucleotide sequence ID" value="NM_001112192.2"/>
</dbReference>
<dbReference type="SMR" id="Q940E8"/>
<dbReference type="FunCoup" id="Q940E8">
    <property type="interactions" value="1111"/>
</dbReference>
<dbReference type="IntAct" id="Q940E8">
    <property type="interactions" value="1"/>
</dbReference>
<dbReference type="STRING" id="4577.Q940E8"/>
<dbReference type="GlyCosmos" id="Q940E8">
    <property type="glycosylation" value="6 sites, No reported glycans"/>
</dbReference>
<dbReference type="PaxDb" id="4577-GRMZM2G104925_P01"/>
<dbReference type="EnsemblPlants" id="Zm00001eb184050_T001">
    <property type="protein sequence ID" value="Zm00001eb184050_P001"/>
    <property type="gene ID" value="Zm00001eb184050"/>
</dbReference>
<dbReference type="GeneID" id="542675"/>
<dbReference type="Gramene" id="Zm00001eb184050_T001">
    <property type="protein sequence ID" value="Zm00001eb184050_P001"/>
    <property type="gene ID" value="Zm00001eb184050"/>
</dbReference>
<dbReference type="KEGG" id="zma:542675"/>
<dbReference type="MaizeGDB" id="493979"/>
<dbReference type="eggNOG" id="KOG0619">
    <property type="taxonomic scope" value="Eukaryota"/>
</dbReference>
<dbReference type="HOGENOM" id="CLU_000288_18_4_1"/>
<dbReference type="InParanoid" id="Q940E8"/>
<dbReference type="OMA" id="FRPARME"/>
<dbReference type="OrthoDB" id="1394818at2759"/>
<dbReference type="Proteomes" id="UP000007305">
    <property type="component" value="Chromosome 4"/>
</dbReference>
<dbReference type="ExpressionAtlas" id="Q940E8">
    <property type="expression patterns" value="baseline and differential"/>
</dbReference>
<dbReference type="GO" id="GO:0005789">
    <property type="term" value="C:endoplasmic reticulum membrane"/>
    <property type="evidence" value="ECO:0007669"/>
    <property type="project" value="EnsemblPlants"/>
</dbReference>
<dbReference type="GO" id="GO:0005886">
    <property type="term" value="C:plasma membrane"/>
    <property type="evidence" value="ECO:0000314"/>
    <property type="project" value="UniProtKB"/>
</dbReference>
<dbReference type="GO" id="GO:0001653">
    <property type="term" value="F:peptide receptor activity"/>
    <property type="evidence" value="ECO:0007669"/>
    <property type="project" value="EnsemblPlants"/>
</dbReference>
<dbReference type="GO" id="GO:0030154">
    <property type="term" value="P:cell differentiation"/>
    <property type="evidence" value="ECO:0007669"/>
    <property type="project" value="UniProtKB-KW"/>
</dbReference>
<dbReference type="GO" id="GO:0009908">
    <property type="term" value="P:flower development"/>
    <property type="evidence" value="ECO:0000315"/>
    <property type="project" value="UniProtKB"/>
</dbReference>
<dbReference type="GO" id="GO:0010078">
    <property type="term" value="P:maintenance of root meristem identity"/>
    <property type="evidence" value="ECO:0007669"/>
    <property type="project" value="EnsemblPlants"/>
</dbReference>
<dbReference type="GO" id="GO:0010088">
    <property type="term" value="P:phloem development"/>
    <property type="evidence" value="ECO:0007669"/>
    <property type="project" value="EnsemblPlants"/>
</dbReference>
<dbReference type="GO" id="GO:0045595">
    <property type="term" value="P:regulation of cell differentiation"/>
    <property type="evidence" value="ECO:0007669"/>
    <property type="project" value="EnsemblPlants"/>
</dbReference>
<dbReference type="GO" id="GO:0048509">
    <property type="term" value="P:regulation of meristem development"/>
    <property type="evidence" value="ECO:0000315"/>
    <property type="project" value="UniProtKB"/>
</dbReference>
<dbReference type="GO" id="GO:0010075">
    <property type="term" value="P:regulation of meristem growth"/>
    <property type="evidence" value="ECO:0007669"/>
    <property type="project" value="EnsemblPlants"/>
</dbReference>
<dbReference type="FunFam" id="3.80.10.10:FF:000385">
    <property type="entry name" value="Leucine-rich repeat family protein"/>
    <property type="match status" value="1"/>
</dbReference>
<dbReference type="FunFam" id="3.80.10.10:FF:000383">
    <property type="entry name" value="Leucine-rich repeat receptor protein kinase EMS1"/>
    <property type="match status" value="1"/>
</dbReference>
<dbReference type="FunFam" id="3.80.10.10:FF:001368">
    <property type="entry name" value="Leucine-rich repeat receptor-like protein CLAVATA2"/>
    <property type="match status" value="1"/>
</dbReference>
<dbReference type="Gene3D" id="3.80.10.10">
    <property type="entry name" value="Ribonuclease Inhibitor"/>
    <property type="match status" value="2"/>
</dbReference>
<dbReference type="InterPro" id="IPR053211">
    <property type="entry name" value="DNA_repair-toleration"/>
</dbReference>
<dbReference type="InterPro" id="IPR001611">
    <property type="entry name" value="Leu-rich_rpt"/>
</dbReference>
<dbReference type="InterPro" id="IPR025875">
    <property type="entry name" value="Leu-rich_rpt_4"/>
</dbReference>
<dbReference type="InterPro" id="IPR003591">
    <property type="entry name" value="Leu-rich_rpt_typical-subtyp"/>
</dbReference>
<dbReference type="InterPro" id="IPR032675">
    <property type="entry name" value="LRR_dom_sf"/>
</dbReference>
<dbReference type="InterPro" id="IPR013210">
    <property type="entry name" value="LRR_N_plant-typ"/>
</dbReference>
<dbReference type="PANTHER" id="PTHR48060">
    <property type="entry name" value="DNA DAMAGE-REPAIR/TOLERATION PROTEIN DRT100"/>
    <property type="match status" value="1"/>
</dbReference>
<dbReference type="PANTHER" id="PTHR48060:SF21">
    <property type="entry name" value="L DOMAIN-LIKE PROTEIN"/>
    <property type="match status" value="1"/>
</dbReference>
<dbReference type="Pfam" id="PF00560">
    <property type="entry name" value="LRR_1"/>
    <property type="match status" value="7"/>
</dbReference>
<dbReference type="Pfam" id="PF12799">
    <property type="entry name" value="LRR_4"/>
    <property type="match status" value="2"/>
</dbReference>
<dbReference type="Pfam" id="PF08263">
    <property type="entry name" value="LRRNT_2"/>
    <property type="match status" value="1"/>
</dbReference>
<dbReference type="PRINTS" id="PR00019">
    <property type="entry name" value="LEURICHRPT"/>
</dbReference>
<dbReference type="SMART" id="SM00369">
    <property type="entry name" value="LRR_TYP"/>
    <property type="match status" value="8"/>
</dbReference>
<dbReference type="SUPFAM" id="SSF52058">
    <property type="entry name" value="L domain-like"/>
    <property type="match status" value="1"/>
</dbReference>
<dbReference type="SUPFAM" id="SSF52047">
    <property type="entry name" value="RNI-like"/>
    <property type="match status" value="1"/>
</dbReference>
<dbReference type="PROSITE" id="PS51450">
    <property type="entry name" value="LRR"/>
    <property type="match status" value="13"/>
</dbReference>
<proteinExistence type="evidence at protein level"/>
<evidence type="ECO:0000255" key="1"/>
<evidence type="ECO:0000269" key="2">
    <source>
    </source>
</evidence>
<evidence type="ECO:0000269" key="3">
    <source>
    </source>
</evidence>
<evidence type="ECO:0000305" key="4"/>